<proteinExistence type="evidence at protein level"/>
<keyword id="KW-0025">Alternative splicing</keyword>
<keyword id="KW-0106">Calcium</keyword>
<keyword id="KW-0963">Cytoplasm</keyword>
<keyword id="KW-0217">Developmental protein</keyword>
<keyword id="KW-0460">Magnesium</keyword>
<keyword id="KW-0479">Metal-binding</keyword>
<keyword id="KW-1267">Proteomics identification</keyword>
<keyword id="KW-1185">Reference proteome</keyword>
<keyword id="KW-0786">Thiamine pyrophosphate</keyword>
<keyword id="KW-0808">Transferase</keyword>
<protein>
    <recommendedName>
        <fullName>Transketolase-like protein 1</fullName>
        <ecNumber evidence="6">2.2.1.1</ecNumber>
    </recommendedName>
    <alternativeName>
        <fullName>Transketolase 2</fullName>
        <shortName>TK 2</shortName>
    </alternativeName>
    <alternativeName>
        <fullName>Transketolase-related protein</fullName>
    </alternativeName>
</protein>
<gene>
    <name type="primary">TKTL1</name>
    <name type="synonym">TKR</name>
    <name type="synonym">TKT2</name>
</gene>
<feature type="chain" id="PRO_0000191899" description="Transketolase-like protein 1">
    <location>
        <begin position="1"/>
        <end position="596"/>
    </location>
</feature>
<feature type="active site" description="Proton donor" evidence="3">
    <location>
        <position position="340"/>
    </location>
</feature>
<feature type="binding site" evidence="3">
    <location>
        <position position="46"/>
    </location>
    <ligand>
        <name>substrate</name>
    </ligand>
</feature>
<feature type="binding site" evidence="2">
    <location>
        <position position="49"/>
    </location>
    <ligand>
        <name>thiamine diphosphate</name>
        <dbReference type="ChEBI" id="CHEBI:58937"/>
    </ligand>
</feature>
<feature type="binding site" evidence="2">
    <location>
        <begin position="94"/>
        <end position="96"/>
    </location>
    <ligand>
        <name>thiamine diphosphate</name>
        <dbReference type="ChEBI" id="CHEBI:58937"/>
    </ligand>
</feature>
<feature type="binding site" evidence="3">
    <location>
        <position position="126"/>
    </location>
    <ligand>
        <name>Mg(2+)</name>
        <dbReference type="ChEBI" id="CHEBI:18420"/>
    </ligand>
</feature>
<feature type="binding site" evidence="2">
    <location>
        <position position="127"/>
    </location>
    <ligand>
        <name>thiamine diphosphate</name>
        <dbReference type="ChEBI" id="CHEBI:58937"/>
    </ligand>
</feature>
<feature type="binding site" evidence="3">
    <location>
        <position position="156"/>
    </location>
    <ligand>
        <name>Mg(2+)</name>
        <dbReference type="ChEBI" id="CHEBI:18420"/>
    </ligand>
</feature>
<feature type="binding site" evidence="2">
    <location>
        <position position="156"/>
    </location>
    <ligand>
        <name>thiamine diphosphate</name>
        <dbReference type="ChEBI" id="CHEBI:58937"/>
    </ligand>
</feature>
<feature type="binding site" evidence="3">
    <location>
        <position position="158"/>
    </location>
    <ligand>
        <name>Mg(2+)</name>
        <dbReference type="ChEBI" id="CHEBI:18420"/>
    </ligand>
</feature>
<feature type="binding site" evidence="1">
    <location>
        <position position="218"/>
    </location>
    <ligand>
        <name>thiamine diphosphate</name>
        <dbReference type="ChEBI" id="CHEBI:58937"/>
    </ligand>
</feature>
<feature type="binding site" evidence="3">
    <location>
        <position position="232"/>
    </location>
    <ligand>
        <name>substrate</name>
    </ligand>
</feature>
<feature type="binding site" evidence="2">
    <location>
        <position position="232"/>
    </location>
    <ligand>
        <name>thiamine diphosphate</name>
        <dbReference type="ChEBI" id="CHEBI:58937"/>
    </ligand>
</feature>
<feature type="binding site" evidence="3">
    <location>
        <position position="292"/>
    </location>
    <ligand>
        <name>substrate</name>
    </ligand>
</feature>
<feature type="binding site" evidence="3">
    <location>
        <position position="319"/>
    </location>
    <ligand>
        <name>substrate</name>
    </ligand>
</feature>
<feature type="binding site" evidence="2">
    <location>
        <position position="340"/>
    </location>
    <ligand>
        <name>thiamine diphosphate</name>
        <dbReference type="ChEBI" id="CHEBI:58937"/>
    </ligand>
</feature>
<feature type="binding site" evidence="2">
    <location>
        <position position="366"/>
    </location>
    <ligand>
        <name>thiamine diphosphate</name>
        <dbReference type="ChEBI" id="CHEBI:58937"/>
    </ligand>
</feature>
<feature type="binding site" evidence="3">
    <location>
        <position position="390"/>
    </location>
    <ligand>
        <name>substrate</name>
    </ligand>
</feature>
<feature type="binding site" evidence="3">
    <location>
        <position position="398"/>
    </location>
    <ligand>
        <name>substrate</name>
    </ligand>
</feature>
<feature type="binding site" evidence="3">
    <location>
        <position position="402"/>
    </location>
    <ligand>
        <name>thiamine diphosphate</name>
        <dbReference type="ChEBI" id="CHEBI:58937"/>
    </ligand>
</feature>
<feature type="binding site" evidence="3">
    <location>
        <position position="448"/>
    </location>
    <ligand>
        <name>substrate</name>
    </ligand>
</feature>
<feature type="site" description="Important for catalytic activity" evidence="2">
    <location>
        <position position="46"/>
    </location>
</feature>
<feature type="site" description="Important for catalytic activity" evidence="2">
    <location>
        <position position="232"/>
    </location>
</feature>
<feature type="splice variant" id="VSP_022290" description="In isoform 2 and isoform 4." evidence="10">
    <location>
        <begin position="1"/>
        <end position="56"/>
    </location>
</feature>
<feature type="splice variant" id="VSP_022291" description="In isoform 2." evidence="10">
    <original>K</original>
    <variation>KGVSMLQDSWSSVISYQK</variation>
    <location>
        <position position="467"/>
    </location>
</feature>
<feature type="sequence variant" id="VAR_029867" description="In dbSNP:rs17855509." evidence="4 5">
    <original>L</original>
    <variation>F</variation>
    <location>
        <position position="24"/>
    </location>
</feature>
<feature type="sequence variant" id="VAR_029868" description="In dbSNP:rs17852259." evidence="4">
    <original>I</original>
    <variation>T</variation>
    <location>
        <position position="152"/>
    </location>
</feature>
<feature type="sequence variant" id="VAR_087456" description="In dbSNP:rs111811311." evidence="7">
    <original>R</original>
    <variation>K</variation>
    <location>
        <position position="317"/>
    </location>
</feature>
<feature type="sequence conflict" description="In Ref. 6; AAA21557." evidence="11" ref="6">
    <original>I</original>
    <variation>N</variation>
    <location>
        <position position="519"/>
    </location>
</feature>
<feature type="sequence conflict" description="In Ref. 6; AAA21557." evidence="11" ref="6">
    <original>T</original>
    <variation>S</variation>
    <location>
        <position position="532"/>
    </location>
</feature>
<sequence>MADAEARAEFPEEARPDRGTLQVLQDMASRLRIHSIRATCSTSSGHPTSCSSSSEIMSVLFFYIMRYKQSDPENPDNDRFVLAKRLSFVDVATGWLGQGLGVACGMAYTGKYFDRASYRVFCLMSDGESSEGSVWEAMAFASYYSLDNLVAIFDVNRLGHSGALPAEHCINIYQRRCEAFGWNTYVVDGRDVEALCQVFWQASQVKHKPTAVVAKTFKGRGTPSIEDAESWHAKPMPRERADAIIKLIESQIQTSRNLDPQPPIEDSPEVNITDVRMTSPPDYRVGDKIATRKACGLALAKLGYANNRVVVLDGDTRYSTFSEIFNKEYPERFIECFMAEQNMVSVALGCASRGRTIAFASTFAAFLTRAFDHIRIGGLAESNINIIGSHCGVSVGDDGASQMALEDIAMFRTIPKCTIFYPTDAVSTEHAVALAANAKGMCFIRTTRPETMVIYTPQERFEIGQAKVLRHCVSDKVTVIGAGITVYEALAAADELSKQDIFIRVIDLFTIKPLDVATIVSSAKATEGRIITVEDHYPQGGIGEAVCAAVSMDPDIQVHSLAVSGVPQSGKSEELLDMYGISARHIIVAVKCMLLN</sequence>
<dbReference type="EC" id="2.2.1.1" evidence="6"/>
<dbReference type="EMBL" id="X91817">
    <property type="protein sequence ID" value="CAA62925.1"/>
    <property type="molecule type" value="mRNA"/>
</dbReference>
<dbReference type="EMBL" id="X91818">
    <property type="protein sequence ID" value="CAA62925.1"/>
    <property type="status" value="JOINED"/>
    <property type="molecule type" value="mRNA"/>
</dbReference>
<dbReference type="EMBL" id="AK292261">
    <property type="protein sequence ID" value="BAF84950.1"/>
    <property type="molecule type" value="mRNA"/>
</dbReference>
<dbReference type="EMBL" id="BX664723">
    <property type="status" value="NOT_ANNOTATED_CDS"/>
    <property type="molecule type" value="Genomic_DNA"/>
</dbReference>
<dbReference type="EMBL" id="Z49258">
    <property type="protein sequence ID" value="CAH69899.1"/>
    <property type="molecule type" value="Genomic_DNA"/>
</dbReference>
<dbReference type="EMBL" id="Z49258">
    <property type="protein sequence ID" value="CAH69900.1"/>
    <property type="molecule type" value="Genomic_DNA"/>
</dbReference>
<dbReference type="EMBL" id="CH471172">
    <property type="protein sequence ID" value="EAW72752.1"/>
    <property type="molecule type" value="Genomic_DNA"/>
</dbReference>
<dbReference type="EMBL" id="BC025382">
    <property type="protein sequence ID" value="AAH25382.2"/>
    <property type="molecule type" value="mRNA"/>
</dbReference>
<dbReference type="EMBL" id="U14622">
    <property type="protein sequence ID" value="AAA21557.1"/>
    <property type="molecule type" value="Genomic_DNA"/>
</dbReference>
<dbReference type="CCDS" id="CCDS35448.1">
    <molecule id="P51854-3"/>
</dbReference>
<dbReference type="CCDS" id="CCDS55541.1">
    <molecule id="P51854-4"/>
</dbReference>
<dbReference type="RefSeq" id="NP_001139406.1">
    <molecule id="P51854-4"/>
    <property type="nucleotide sequence ID" value="NM_001145934.2"/>
</dbReference>
<dbReference type="RefSeq" id="NP_036385.3">
    <molecule id="P51854-3"/>
    <property type="nucleotide sequence ID" value="NM_012253.4"/>
</dbReference>
<dbReference type="SMR" id="P51854"/>
<dbReference type="BioGRID" id="113890">
    <property type="interactions" value="16"/>
</dbReference>
<dbReference type="FunCoup" id="P51854">
    <property type="interactions" value="312"/>
</dbReference>
<dbReference type="IntAct" id="P51854">
    <property type="interactions" value="6"/>
</dbReference>
<dbReference type="STRING" id="9606.ENSP00000358931"/>
<dbReference type="DrugCentral" id="P51854"/>
<dbReference type="iPTMnet" id="P51854"/>
<dbReference type="PhosphoSitePlus" id="P51854"/>
<dbReference type="BioMuta" id="TKTL1"/>
<dbReference type="DMDM" id="122066426"/>
<dbReference type="jPOST" id="P51854"/>
<dbReference type="MassIVE" id="P51854"/>
<dbReference type="PaxDb" id="9606-ENSP00000358931"/>
<dbReference type="PeptideAtlas" id="P51854"/>
<dbReference type="ProteomicsDB" id="56434">
    <molecule id="P51854-3"/>
</dbReference>
<dbReference type="ProteomicsDB" id="56435">
    <molecule id="P51854-1"/>
</dbReference>
<dbReference type="ProteomicsDB" id="65205"/>
<dbReference type="Antibodypedia" id="17549">
    <property type="antibodies" value="68 antibodies from 23 providers"/>
</dbReference>
<dbReference type="DNASU" id="8277"/>
<dbReference type="Ensembl" id="ENST00000369912.2">
    <molecule id="P51854-4"/>
    <property type="protein sequence ID" value="ENSP00000358928.2"/>
    <property type="gene ID" value="ENSG00000007350.18"/>
</dbReference>
<dbReference type="Ensembl" id="ENST00000369915.8">
    <molecule id="P51854-3"/>
    <property type="protein sequence ID" value="ENSP00000358931.3"/>
    <property type="gene ID" value="ENSG00000007350.18"/>
</dbReference>
<dbReference type="GeneID" id="8277"/>
<dbReference type="KEGG" id="hsa:8277"/>
<dbReference type="MANE-Select" id="ENST00000369915.8">
    <property type="protein sequence ID" value="ENSP00000358931.3"/>
    <property type="RefSeq nucleotide sequence ID" value="NM_012253.4"/>
    <property type="RefSeq protein sequence ID" value="NP_036385.3"/>
</dbReference>
<dbReference type="UCSC" id="uc004fkg.4">
    <molecule id="P51854-3"/>
    <property type="organism name" value="human"/>
</dbReference>
<dbReference type="AGR" id="HGNC:11835"/>
<dbReference type="CTD" id="8277"/>
<dbReference type="DisGeNET" id="8277"/>
<dbReference type="GeneCards" id="TKTL1"/>
<dbReference type="HGNC" id="HGNC:11835">
    <property type="gene designation" value="TKTL1"/>
</dbReference>
<dbReference type="HPA" id="ENSG00000007350">
    <property type="expression patterns" value="Tissue enriched (testis)"/>
</dbReference>
<dbReference type="MIM" id="300044">
    <property type="type" value="gene"/>
</dbReference>
<dbReference type="neXtProt" id="NX_P51854"/>
<dbReference type="OpenTargets" id="ENSG00000007350"/>
<dbReference type="PharmGKB" id="PA36538"/>
<dbReference type="VEuPathDB" id="HostDB:ENSG00000007350"/>
<dbReference type="eggNOG" id="KOG0523">
    <property type="taxonomic scope" value="Eukaryota"/>
</dbReference>
<dbReference type="GeneTree" id="ENSGT00940000162426"/>
<dbReference type="HOGENOM" id="CLU_009227_3_0_1"/>
<dbReference type="InParanoid" id="P51854"/>
<dbReference type="OMA" id="EWTTGNL"/>
<dbReference type="OrthoDB" id="10267175at2759"/>
<dbReference type="PAN-GO" id="P51854">
    <property type="GO annotations" value="2 GO annotations based on evolutionary models"/>
</dbReference>
<dbReference type="PhylomeDB" id="P51854"/>
<dbReference type="TreeFam" id="TF313097"/>
<dbReference type="BRENDA" id="2.2.1.1">
    <property type="organism ID" value="2681"/>
</dbReference>
<dbReference type="PathwayCommons" id="P51854"/>
<dbReference type="SABIO-RK" id="P51854"/>
<dbReference type="SignaLink" id="P51854"/>
<dbReference type="BioGRID-ORCS" id="8277">
    <property type="hits" value="9 hits in 771 CRISPR screens"/>
</dbReference>
<dbReference type="ChiTaRS" id="TKTL1">
    <property type="organism name" value="human"/>
</dbReference>
<dbReference type="GeneWiki" id="TKTL1"/>
<dbReference type="GenomeRNAi" id="8277"/>
<dbReference type="Pharos" id="P51854">
    <property type="development level" value="Tbio"/>
</dbReference>
<dbReference type="PRO" id="PR:P51854"/>
<dbReference type="Proteomes" id="UP000005640">
    <property type="component" value="Chromosome X"/>
</dbReference>
<dbReference type="RNAct" id="P51854">
    <property type="molecule type" value="protein"/>
</dbReference>
<dbReference type="Bgee" id="ENSG00000007350">
    <property type="expression patterns" value="Expressed in male germ line stem cell (sensu Vertebrata) in testis and 110 other cell types or tissues"/>
</dbReference>
<dbReference type="ExpressionAtlas" id="P51854">
    <property type="expression patterns" value="baseline and differential"/>
</dbReference>
<dbReference type="GO" id="GO:0005829">
    <property type="term" value="C:cytosol"/>
    <property type="evidence" value="ECO:0000314"/>
    <property type="project" value="HPA"/>
</dbReference>
<dbReference type="GO" id="GO:0046872">
    <property type="term" value="F:metal ion binding"/>
    <property type="evidence" value="ECO:0007669"/>
    <property type="project" value="UniProtKB-KW"/>
</dbReference>
<dbReference type="GO" id="GO:0030976">
    <property type="term" value="F:thiamine pyrophosphate binding"/>
    <property type="evidence" value="ECO:0000318"/>
    <property type="project" value="GO_Central"/>
</dbReference>
<dbReference type="GO" id="GO:0004802">
    <property type="term" value="F:transketolase activity"/>
    <property type="evidence" value="ECO:0000318"/>
    <property type="project" value="GO_Central"/>
</dbReference>
<dbReference type="GO" id="GO:0006007">
    <property type="term" value="P:glucose catabolic process"/>
    <property type="evidence" value="ECO:0000304"/>
    <property type="project" value="ProtInc"/>
</dbReference>
<dbReference type="GO" id="GO:0006772">
    <property type="term" value="P:thiamine metabolic process"/>
    <property type="evidence" value="ECO:0000304"/>
    <property type="project" value="ProtInc"/>
</dbReference>
<dbReference type="CDD" id="cd07033">
    <property type="entry name" value="TPP_PYR_DXS_TK_like"/>
    <property type="match status" value="1"/>
</dbReference>
<dbReference type="FunFam" id="3.40.50.970:FF:000028">
    <property type="entry name" value="Transketolase isoform 1"/>
    <property type="match status" value="1"/>
</dbReference>
<dbReference type="FunFam" id="3.40.50.970:FF:000033">
    <property type="entry name" value="Transketolase isoform 1"/>
    <property type="match status" value="1"/>
</dbReference>
<dbReference type="FunFam" id="3.40.50.920:FF:000008">
    <property type="entry name" value="transketolase isoform X2"/>
    <property type="match status" value="1"/>
</dbReference>
<dbReference type="Gene3D" id="3.40.50.920">
    <property type="match status" value="1"/>
</dbReference>
<dbReference type="Gene3D" id="3.40.50.970">
    <property type="match status" value="2"/>
</dbReference>
<dbReference type="InterPro" id="IPR029061">
    <property type="entry name" value="THDP-binding"/>
</dbReference>
<dbReference type="InterPro" id="IPR009014">
    <property type="entry name" value="Transketo_C/PFOR_II"/>
</dbReference>
<dbReference type="InterPro" id="IPR051424">
    <property type="entry name" value="Transketolase-like"/>
</dbReference>
<dbReference type="InterPro" id="IPR005475">
    <property type="entry name" value="Transketolase-like_Pyr-bd"/>
</dbReference>
<dbReference type="InterPro" id="IPR020826">
    <property type="entry name" value="Transketolase_BS"/>
</dbReference>
<dbReference type="InterPro" id="IPR033248">
    <property type="entry name" value="Transketolase_C"/>
</dbReference>
<dbReference type="InterPro" id="IPR005474">
    <property type="entry name" value="Transketolase_N"/>
</dbReference>
<dbReference type="NCBIfam" id="NF004559">
    <property type="entry name" value="PRK05899.2-5"/>
    <property type="match status" value="1"/>
</dbReference>
<dbReference type="PANTHER" id="PTHR43195">
    <property type="entry name" value="TRANSKETOLASE"/>
    <property type="match status" value="1"/>
</dbReference>
<dbReference type="PANTHER" id="PTHR43195:SF2">
    <property type="entry name" value="TRANSKETOLASE-LIKE PROTEIN 1"/>
    <property type="match status" value="1"/>
</dbReference>
<dbReference type="Pfam" id="PF02779">
    <property type="entry name" value="Transket_pyr"/>
    <property type="match status" value="1"/>
</dbReference>
<dbReference type="Pfam" id="PF02780">
    <property type="entry name" value="Transketolase_C"/>
    <property type="match status" value="1"/>
</dbReference>
<dbReference type="Pfam" id="PF00456">
    <property type="entry name" value="Transketolase_N"/>
    <property type="match status" value="1"/>
</dbReference>
<dbReference type="SMART" id="SM00861">
    <property type="entry name" value="Transket_pyr"/>
    <property type="match status" value="1"/>
</dbReference>
<dbReference type="SUPFAM" id="SSF52518">
    <property type="entry name" value="Thiamin diphosphate-binding fold (THDP-binding)"/>
    <property type="match status" value="2"/>
</dbReference>
<dbReference type="SUPFAM" id="SSF52922">
    <property type="entry name" value="TK C-terminal domain-like"/>
    <property type="match status" value="1"/>
</dbReference>
<dbReference type="PROSITE" id="PS00802">
    <property type="entry name" value="TRANSKETOLASE_2"/>
    <property type="match status" value="1"/>
</dbReference>
<organism>
    <name type="scientific">Homo sapiens</name>
    <name type="common">Human</name>
    <dbReference type="NCBI Taxonomy" id="9606"/>
    <lineage>
        <taxon>Eukaryota</taxon>
        <taxon>Metazoa</taxon>
        <taxon>Chordata</taxon>
        <taxon>Craniata</taxon>
        <taxon>Vertebrata</taxon>
        <taxon>Euteleostomi</taxon>
        <taxon>Mammalia</taxon>
        <taxon>Eutheria</taxon>
        <taxon>Euarchontoglires</taxon>
        <taxon>Primates</taxon>
        <taxon>Haplorrhini</taxon>
        <taxon>Catarrhini</taxon>
        <taxon>Hominidae</taxon>
        <taxon>Homo</taxon>
    </lineage>
</organism>
<comment type="function">
    <text evidence="2">Catalyzes the transfer of a two-carbon ketol group from a ketose donor to an aldose acceptor, via a covalent intermediate with the cofactor thiamine pyrophosphate.</text>
</comment>
<comment type="function">
    <molecule>Isoform 4</molecule>
    <text evidence="7">During fetal neocortex development, may be essential to maintain the full number of basal radial glia (bRG). bRG are neural progenitor cells that undergo asymmetric divisions, generating a bRG (self-renewal) and a neuron, in contrast to basal intermediate progenitors (bIPs), which typically divide once to give rise to 2 neurons. bRG generate more cortical neurons over time than bIPs.</text>
</comment>
<comment type="catalytic activity">
    <reaction evidence="6">
        <text>D-sedoheptulose 7-phosphate + D-glyceraldehyde 3-phosphate = aldehydo-D-ribose 5-phosphate + D-xylulose 5-phosphate</text>
        <dbReference type="Rhea" id="RHEA:10508"/>
        <dbReference type="ChEBI" id="CHEBI:57483"/>
        <dbReference type="ChEBI" id="CHEBI:57737"/>
        <dbReference type="ChEBI" id="CHEBI:58273"/>
        <dbReference type="ChEBI" id="CHEBI:59776"/>
        <dbReference type="EC" id="2.2.1.1"/>
    </reaction>
    <physiologicalReaction direction="right-to-left" evidence="6">
        <dbReference type="Rhea" id="RHEA:10510"/>
    </physiologicalReaction>
</comment>
<comment type="cofactor">
    <cofactor evidence="2">
        <name>Mg(2+)</name>
        <dbReference type="ChEBI" id="CHEBI:18420"/>
    </cofactor>
    <cofactor evidence="2">
        <name>Ca(2+)</name>
        <dbReference type="ChEBI" id="CHEBI:29108"/>
    </cofactor>
    <cofactor evidence="2">
        <name>Mn(2+)</name>
        <dbReference type="ChEBI" id="CHEBI:29035"/>
    </cofactor>
    <cofactor evidence="2">
        <name>Co(2+)</name>
        <dbReference type="ChEBI" id="CHEBI:48828"/>
    </cofactor>
    <text evidence="2">Binds 1 Mg(2+) ion per subunit. Can also utilize other divalent metal cations, such as Ca(2+), Mn(2+) and Co(2+).</text>
</comment>
<comment type="cofactor">
    <cofactor evidence="2">
        <name>thiamine diphosphate</name>
        <dbReference type="ChEBI" id="CHEBI:58937"/>
    </cofactor>
    <text evidence="2">Binds 1 thiamine pyrophosphate per subunit.</text>
</comment>
<comment type="subunit">
    <text evidence="2">Homodimer.</text>
</comment>
<comment type="subcellular location">
    <subcellularLocation>
        <location evidence="12">Cytoplasm</location>
    </subcellularLocation>
</comment>
<comment type="alternative products">
    <event type="alternative splicing"/>
    <isoform>
        <id>P51854-3</id>
        <name>3</name>
        <name evidence="9">Long</name>
        <sequence type="displayed"/>
    </isoform>
    <isoform>
        <id>P51854-1</id>
        <name>2</name>
        <sequence type="described" ref="VSP_022290 VSP_022291"/>
    </isoform>
    <isoform>
        <id>P51854-4</id>
        <name>4</name>
        <name evidence="9">Short</name>
        <sequence type="described" ref="VSP_022290"/>
    </isoform>
</comment>
<comment type="tissue specificity">
    <text evidence="6 8">Widely expressed (PubMed:8838793). Expressed in endothelial cells and in peripheral neurons (at protein level) (PubMed:15991799).</text>
</comment>
<comment type="tissue specificity">
    <molecule>Isoform 3</molecule>
    <text evidence="7">Not expressed in fetal neocortex.</text>
</comment>
<comment type="tissue specificity">
    <molecule>Isoform 4</molecule>
    <text evidence="7">Expressed in fetal neocortex.</text>
</comment>
<comment type="developmental stage">
    <molecule>Isoform 4</molecule>
    <text evidence="7">Expressed in fetal neocortex, with highest expression in the developing frontal lobe. Expression increases with development from 9 to at least 17 postconception weeks (PCW). At 11 PCW, expression in frontal lobe is detectable in the ventricular zone and subventricular zone. At PCW 17, highly expressed in the frontal lobe of fetal neocortex, but not in the occipital lobe.</text>
</comment>
<comment type="polymorphism">
    <text evidence="7">Variant Lys-317 is typically present in extinct archaic humans, Neanderthals and Denisovans, as well as in other primates. It is rare in modern human population with a frequency of 0.03%. No homozygote is reported in the Genome Aggregation Database (gnomAD v2.1.1). The modern human variant Arg-317 is thought to lead to a greater neocortical neurogenesis compared to archaic human Lys-317, in particular in the frontal lobe. It is currently unknown if the presence of variant Lys-317 in modern humans is associated with a disease or has any effect on cognitive skills.</text>
</comment>
<comment type="similarity">
    <text evidence="11">Belongs to the transketolase family.</text>
</comment>
<reference key="1">
    <citation type="journal article" date="1996" name="Genomics">
        <title>Molecular cloning of tissue-specific transcripts of a transketolase-related gene: implications for the evolution of new vertebrate genes.</title>
        <authorList>
            <person name="Coy J.F."/>
            <person name="Duebel S."/>
            <person name="Kioschis P."/>
            <person name="Thomas K."/>
            <person name="Micklem G."/>
            <person name="Delius H."/>
            <person name="Poustka A."/>
        </authorList>
    </citation>
    <scope>NUCLEOTIDE SEQUENCE [MRNA] (ISOFORM 2)</scope>
    <scope>TISSUE SPECIFICITY</scope>
    <source>
        <tissue>Fetal brain</tissue>
    </source>
</reference>
<reference key="2">
    <citation type="journal article" date="2004" name="Nat. Genet.">
        <title>Complete sequencing and characterization of 21,243 full-length human cDNAs.</title>
        <authorList>
            <person name="Ota T."/>
            <person name="Suzuki Y."/>
            <person name="Nishikawa T."/>
            <person name="Otsuki T."/>
            <person name="Sugiyama T."/>
            <person name="Irie R."/>
            <person name="Wakamatsu A."/>
            <person name="Hayashi K."/>
            <person name="Sato H."/>
            <person name="Nagai K."/>
            <person name="Kimura K."/>
            <person name="Makita H."/>
            <person name="Sekine M."/>
            <person name="Obayashi M."/>
            <person name="Nishi T."/>
            <person name="Shibahara T."/>
            <person name="Tanaka T."/>
            <person name="Ishii S."/>
            <person name="Yamamoto J."/>
            <person name="Saito K."/>
            <person name="Kawai Y."/>
            <person name="Isono Y."/>
            <person name="Nakamura Y."/>
            <person name="Nagahari K."/>
            <person name="Murakami K."/>
            <person name="Yasuda T."/>
            <person name="Iwayanagi T."/>
            <person name="Wagatsuma M."/>
            <person name="Shiratori A."/>
            <person name="Sudo H."/>
            <person name="Hosoiri T."/>
            <person name="Kaku Y."/>
            <person name="Kodaira H."/>
            <person name="Kondo H."/>
            <person name="Sugawara M."/>
            <person name="Takahashi M."/>
            <person name="Kanda K."/>
            <person name="Yokoi T."/>
            <person name="Furuya T."/>
            <person name="Kikkawa E."/>
            <person name="Omura Y."/>
            <person name="Abe K."/>
            <person name="Kamihara K."/>
            <person name="Katsuta N."/>
            <person name="Sato K."/>
            <person name="Tanikawa M."/>
            <person name="Yamazaki M."/>
            <person name="Ninomiya K."/>
            <person name="Ishibashi T."/>
            <person name="Yamashita H."/>
            <person name="Murakawa K."/>
            <person name="Fujimori K."/>
            <person name="Tanai H."/>
            <person name="Kimata M."/>
            <person name="Watanabe M."/>
            <person name="Hiraoka S."/>
            <person name="Chiba Y."/>
            <person name="Ishida S."/>
            <person name="Ono Y."/>
            <person name="Takiguchi S."/>
            <person name="Watanabe S."/>
            <person name="Yosida M."/>
            <person name="Hotuta T."/>
            <person name="Kusano J."/>
            <person name="Kanehori K."/>
            <person name="Takahashi-Fujii A."/>
            <person name="Hara H."/>
            <person name="Tanase T.-O."/>
            <person name="Nomura Y."/>
            <person name="Togiya S."/>
            <person name="Komai F."/>
            <person name="Hara R."/>
            <person name="Takeuchi K."/>
            <person name="Arita M."/>
            <person name="Imose N."/>
            <person name="Musashino K."/>
            <person name="Yuuki H."/>
            <person name="Oshima A."/>
            <person name="Sasaki N."/>
            <person name="Aotsuka S."/>
            <person name="Yoshikawa Y."/>
            <person name="Matsunawa H."/>
            <person name="Ichihara T."/>
            <person name="Shiohata N."/>
            <person name="Sano S."/>
            <person name="Moriya S."/>
            <person name="Momiyama H."/>
            <person name="Satoh N."/>
            <person name="Takami S."/>
            <person name="Terashima Y."/>
            <person name="Suzuki O."/>
            <person name="Nakagawa S."/>
            <person name="Senoh A."/>
            <person name="Mizoguchi H."/>
            <person name="Goto Y."/>
            <person name="Shimizu F."/>
            <person name="Wakebe H."/>
            <person name="Hishigaki H."/>
            <person name="Watanabe T."/>
            <person name="Sugiyama A."/>
            <person name="Takemoto M."/>
            <person name="Kawakami B."/>
            <person name="Yamazaki M."/>
            <person name="Watanabe K."/>
            <person name="Kumagai A."/>
            <person name="Itakura S."/>
            <person name="Fukuzumi Y."/>
            <person name="Fujimori Y."/>
            <person name="Komiyama M."/>
            <person name="Tashiro H."/>
            <person name="Tanigami A."/>
            <person name="Fujiwara T."/>
            <person name="Ono T."/>
            <person name="Yamada K."/>
            <person name="Fujii Y."/>
            <person name="Ozaki K."/>
            <person name="Hirao M."/>
            <person name="Ohmori Y."/>
            <person name="Kawabata A."/>
            <person name="Hikiji T."/>
            <person name="Kobatake N."/>
            <person name="Inagaki H."/>
            <person name="Ikema Y."/>
            <person name="Okamoto S."/>
            <person name="Okitani R."/>
            <person name="Kawakami T."/>
            <person name="Noguchi S."/>
            <person name="Itoh T."/>
            <person name="Shigeta K."/>
            <person name="Senba T."/>
            <person name="Matsumura K."/>
            <person name="Nakajima Y."/>
            <person name="Mizuno T."/>
            <person name="Morinaga M."/>
            <person name="Sasaki M."/>
            <person name="Togashi T."/>
            <person name="Oyama M."/>
            <person name="Hata H."/>
            <person name="Watanabe M."/>
            <person name="Komatsu T."/>
            <person name="Mizushima-Sugano J."/>
            <person name="Satoh T."/>
            <person name="Shirai Y."/>
            <person name="Takahashi Y."/>
            <person name="Nakagawa K."/>
            <person name="Okumura K."/>
            <person name="Nagase T."/>
            <person name="Nomura N."/>
            <person name="Kikuchi H."/>
            <person name="Masuho Y."/>
            <person name="Yamashita R."/>
            <person name="Nakai K."/>
            <person name="Yada T."/>
            <person name="Nakamura Y."/>
            <person name="Ohara O."/>
            <person name="Isogai T."/>
            <person name="Sugano S."/>
        </authorList>
    </citation>
    <scope>NUCLEOTIDE SEQUENCE [LARGE SCALE MRNA] (ISOFORM 3)</scope>
    <source>
        <tissue>Testis</tissue>
    </source>
</reference>
<reference key="3">
    <citation type="journal article" date="2005" name="Nature">
        <title>The DNA sequence of the human X chromosome.</title>
        <authorList>
            <person name="Ross M.T."/>
            <person name="Grafham D.V."/>
            <person name="Coffey A.J."/>
            <person name="Scherer S."/>
            <person name="McLay K."/>
            <person name="Muzny D."/>
            <person name="Platzer M."/>
            <person name="Howell G.R."/>
            <person name="Burrows C."/>
            <person name="Bird C.P."/>
            <person name="Frankish A."/>
            <person name="Lovell F.L."/>
            <person name="Howe K.L."/>
            <person name="Ashurst J.L."/>
            <person name="Fulton R.S."/>
            <person name="Sudbrak R."/>
            <person name="Wen G."/>
            <person name="Jones M.C."/>
            <person name="Hurles M.E."/>
            <person name="Andrews T.D."/>
            <person name="Scott C.E."/>
            <person name="Searle S."/>
            <person name="Ramser J."/>
            <person name="Whittaker A."/>
            <person name="Deadman R."/>
            <person name="Carter N.P."/>
            <person name="Hunt S.E."/>
            <person name="Chen R."/>
            <person name="Cree A."/>
            <person name="Gunaratne P."/>
            <person name="Havlak P."/>
            <person name="Hodgson A."/>
            <person name="Metzker M.L."/>
            <person name="Richards S."/>
            <person name="Scott G."/>
            <person name="Steffen D."/>
            <person name="Sodergren E."/>
            <person name="Wheeler D.A."/>
            <person name="Worley K.C."/>
            <person name="Ainscough R."/>
            <person name="Ambrose K.D."/>
            <person name="Ansari-Lari M.A."/>
            <person name="Aradhya S."/>
            <person name="Ashwell R.I."/>
            <person name="Babbage A.K."/>
            <person name="Bagguley C.L."/>
            <person name="Ballabio A."/>
            <person name="Banerjee R."/>
            <person name="Barker G.E."/>
            <person name="Barlow K.F."/>
            <person name="Barrett I.P."/>
            <person name="Bates K.N."/>
            <person name="Beare D.M."/>
            <person name="Beasley H."/>
            <person name="Beasley O."/>
            <person name="Beck A."/>
            <person name="Bethel G."/>
            <person name="Blechschmidt K."/>
            <person name="Brady N."/>
            <person name="Bray-Allen S."/>
            <person name="Bridgeman A.M."/>
            <person name="Brown A.J."/>
            <person name="Brown M.J."/>
            <person name="Bonnin D."/>
            <person name="Bruford E.A."/>
            <person name="Buhay C."/>
            <person name="Burch P."/>
            <person name="Burford D."/>
            <person name="Burgess J."/>
            <person name="Burrill W."/>
            <person name="Burton J."/>
            <person name="Bye J.M."/>
            <person name="Carder C."/>
            <person name="Carrel L."/>
            <person name="Chako J."/>
            <person name="Chapman J.C."/>
            <person name="Chavez D."/>
            <person name="Chen E."/>
            <person name="Chen G."/>
            <person name="Chen Y."/>
            <person name="Chen Z."/>
            <person name="Chinault C."/>
            <person name="Ciccodicola A."/>
            <person name="Clark S.Y."/>
            <person name="Clarke G."/>
            <person name="Clee C.M."/>
            <person name="Clegg S."/>
            <person name="Clerc-Blankenburg K."/>
            <person name="Clifford K."/>
            <person name="Cobley V."/>
            <person name="Cole C.G."/>
            <person name="Conquer J.S."/>
            <person name="Corby N."/>
            <person name="Connor R.E."/>
            <person name="David R."/>
            <person name="Davies J."/>
            <person name="Davis C."/>
            <person name="Davis J."/>
            <person name="Delgado O."/>
            <person name="Deshazo D."/>
            <person name="Dhami P."/>
            <person name="Ding Y."/>
            <person name="Dinh H."/>
            <person name="Dodsworth S."/>
            <person name="Draper H."/>
            <person name="Dugan-Rocha S."/>
            <person name="Dunham A."/>
            <person name="Dunn M."/>
            <person name="Durbin K.J."/>
            <person name="Dutta I."/>
            <person name="Eades T."/>
            <person name="Ellwood M."/>
            <person name="Emery-Cohen A."/>
            <person name="Errington H."/>
            <person name="Evans K.L."/>
            <person name="Faulkner L."/>
            <person name="Francis F."/>
            <person name="Frankland J."/>
            <person name="Fraser A.E."/>
            <person name="Galgoczy P."/>
            <person name="Gilbert J."/>
            <person name="Gill R."/>
            <person name="Gloeckner G."/>
            <person name="Gregory S.G."/>
            <person name="Gribble S."/>
            <person name="Griffiths C."/>
            <person name="Grocock R."/>
            <person name="Gu Y."/>
            <person name="Gwilliam R."/>
            <person name="Hamilton C."/>
            <person name="Hart E.A."/>
            <person name="Hawes A."/>
            <person name="Heath P.D."/>
            <person name="Heitmann K."/>
            <person name="Hennig S."/>
            <person name="Hernandez J."/>
            <person name="Hinzmann B."/>
            <person name="Ho S."/>
            <person name="Hoffs M."/>
            <person name="Howden P.J."/>
            <person name="Huckle E.J."/>
            <person name="Hume J."/>
            <person name="Hunt P.J."/>
            <person name="Hunt A.R."/>
            <person name="Isherwood J."/>
            <person name="Jacob L."/>
            <person name="Johnson D."/>
            <person name="Jones S."/>
            <person name="de Jong P.J."/>
            <person name="Joseph S.S."/>
            <person name="Keenan S."/>
            <person name="Kelly S."/>
            <person name="Kershaw J.K."/>
            <person name="Khan Z."/>
            <person name="Kioschis P."/>
            <person name="Klages S."/>
            <person name="Knights A.J."/>
            <person name="Kosiura A."/>
            <person name="Kovar-Smith C."/>
            <person name="Laird G.K."/>
            <person name="Langford C."/>
            <person name="Lawlor S."/>
            <person name="Leversha M."/>
            <person name="Lewis L."/>
            <person name="Liu W."/>
            <person name="Lloyd C."/>
            <person name="Lloyd D.M."/>
            <person name="Loulseged H."/>
            <person name="Loveland J.E."/>
            <person name="Lovell J.D."/>
            <person name="Lozado R."/>
            <person name="Lu J."/>
            <person name="Lyne R."/>
            <person name="Ma J."/>
            <person name="Maheshwari M."/>
            <person name="Matthews L.H."/>
            <person name="McDowall J."/>
            <person name="McLaren S."/>
            <person name="McMurray A."/>
            <person name="Meidl P."/>
            <person name="Meitinger T."/>
            <person name="Milne S."/>
            <person name="Miner G."/>
            <person name="Mistry S.L."/>
            <person name="Morgan M."/>
            <person name="Morris S."/>
            <person name="Mueller I."/>
            <person name="Mullikin J.C."/>
            <person name="Nguyen N."/>
            <person name="Nordsiek G."/>
            <person name="Nyakatura G."/>
            <person name="O'dell C.N."/>
            <person name="Okwuonu G."/>
            <person name="Palmer S."/>
            <person name="Pandian R."/>
            <person name="Parker D."/>
            <person name="Parrish J."/>
            <person name="Pasternak S."/>
            <person name="Patel D."/>
            <person name="Pearce A.V."/>
            <person name="Pearson D.M."/>
            <person name="Pelan S.E."/>
            <person name="Perez L."/>
            <person name="Porter K.M."/>
            <person name="Ramsey Y."/>
            <person name="Reichwald K."/>
            <person name="Rhodes S."/>
            <person name="Ridler K.A."/>
            <person name="Schlessinger D."/>
            <person name="Schueler M.G."/>
            <person name="Sehra H.K."/>
            <person name="Shaw-Smith C."/>
            <person name="Shen H."/>
            <person name="Sheridan E.M."/>
            <person name="Shownkeen R."/>
            <person name="Skuce C.D."/>
            <person name="Smith M.L."/>
            <person name="Sotheran E.C."/>
            <person name="Steingruber H.E."/>
            <person name="Steward C.A."/>
            <person name="Storey R."/>
            <person name="Swann R.M."/>
            <person name="Swarbreck D."/>
            <person name="Tabor P.E."/>
            <person name="Taudien S."/>
            <person name="Taylor T."/>
            <person name="Teague B."/>
            <person name="Thomas K."/>
            <person name="Thorpe A."/>
            <person name="Timms K."/>
            <person name="Tracey A."/>
            <person name="Trevanion S."/>
            <person name="Tromans A.C."/>
            <person name="d'Urso M."/>
            <person name="Verduzco D."/>
            <person name="Villasana D."/>
            <person name="Waldron L."/>
            <person name="Wall M."/>
            <person name="Wang Q."/>
            <person name="Warren J."/>
            <person name="Warry G.L."/>
            <person name="Wei X."/>
            <person name="West A."/>
            <person name="Whitehead S.L."/>
            <person name="Whiteley M.N."/>
            <person name="Wilkinson J.E."/>
            <person name="Willey D.L."/>
            <person name="Williams G."/>
            <person name="Williams L."/>
            <person name="Williamson A."/>
            <person name="Williamson H."/>
            <person name="Wilming L."/>
            <person name="Woodmansey R.L."/>
            <person name="Wray P.W."/>
            <person name="Yen J."/>
            <person name="Zhang J."/>
            <person name="Zhou J."/>
            <person name="Zoghbi H."/>
            <person name="Zorilla S."/>
            <person name="Buck D."/>
            <person name="Reinhardt R."/>
            <person name="Poustka A."/>
            <person name="Rosenthal A."/>
            <person name="Lehrach H."/>
            <person name="Meindl A."/>
            <person name="Minx P.J."/>
            <person name="Hillier L.W."/>
            <person name="Willard H.F."/>
            <person name="Wilson R.K."/>
            <person name="Waterston R.H."/>
            <person name="Rice C.M."/>
            <person name="Vaudin M."/>
            <person name="Coulson A."/>
            <person name="Nelson D.L."/>
            <person name="Weinstock G."/>
            <person name="Sulston J.E."/>
            <person name="Durbin R.M."/>
            <person name="Hubbard T."/>
            <person name="Gibbs R.A."/>
            <person name="Beck S."/>
            <person name="Rogers J."/>
            <person name="Bentley D.R."/>
        </authorList>
    </citation>
    <scope>NUCLEOTIDE SEQUENCE [LARGE SCALE GENOMIC DNA]</scope>
    <scope>VARIANT PHE-24</scope>
</reference>
<reference key="4">
    <citation type="submission" date="2005-09" db="EMBL/GenBank/DDBJ databases">
        <authorList>
            <person name="Mural R.J."/>
            <person name="Istrail S."/>
            <person name="Sutton G.G."/>
            <person name="Florea L."/>
            <person name="Halpern A.L."/>
            <person name="Mobarry C.M."/>
            <person name="Lippert R."/>
            <person name="Walenz B."/>
            <person name="Shatkay H."/>
            <person name="Dew I."/>
            <person name="Miller J.R."/>
            <person name="Flanigan M.J."/>
            <person name="Edwards N.J."/>
            <person name="Bolanos R."/>
            <person name="Fasulo D."/>
            <person name="Halldorsson B.V."/>
            <person name="Hannenhalli S."/>
            <person name="Turner R."/>
            <person name="Yooseph S."/>
            <person name="Lu F."/>
            <person name="Nusskern D.R."/>
            <person name="Shue B.C."/>
            <person name="Zheng X.H."/>
            <person name="Zhong F."/>
            <person name="Delcher A.L."/>
            <person name="Huson D.H."/>
            <person name="Kravitz S.A."/>
            <person name="Mouchard L."/>
            <person name="Reinert K."/>
            <person name="Remington K.A."/>
            <person name="Clark A.G."/>
            <person name="Waterman M.S."/>
            <person name="Eichler E.E."/>
            <person name="Adams M.D."/>
            <person name="Hunkapiller M.W."/>
            <person name="Myers E.W."/>
            <person name="Venter J.C."/>
        </authorList>
    </citation>
    <scope>NUCLEOTIDE SEQUENCE [LARGE SCALE GENOMIC DNA]</scope>
</reference>
<reference key="5">
    <citation type="journal article" date="2004" name="Genome Res.">
        <title>The status, quality, and expansion of the NIH full-length cDNA project: the Mammalian Gene Collection (MGC).</title>
        <authorList>
            <consortium name="The MGC Project Team"/>
        </authorList>
    </citation>
    <scope>NUCLEOTIDE SEQUENCE [LARGE SCALE MRNA] (ISOFORM 3)</scope>
    <scope>VARIANTS PHE-24 AND THR-152</scope>
    <source>
        <tissue>Testis</tissue>
    </source>
</reference>
<reference key="6">
    <citation type="submission" date="1994-09" db="EMBL/GenBank/DDBJ databases">
        <authorList>
            <person name="Hochgeschwender U."/>
        </authorList>
    </citation>
    <scope>NUCLEOTIDE SEQUENCE [GENOMIC DNA] OF 475-537</scope>
</reference>
<reference key="7">
    <citation type="journal article" date="2005" name="Clin. Lab.">
        <title>Mutations in the transketolase-like gene TKTL1: clinical implications for neurodegenerative diseases, diabetes and cancer.</title>
        <authorList>
            <person name="Coy J.F."/>
            <person name="Dressler D."/>
            <person name="Wilde J."/>
            <person name="Schubert P."/>
        </authorList>
    </citation>
    <scope>CATALYTIC ACTIVITY</scope>
    <scope>SUBCELLULAR LOCATION</scope>
    <scope>TISSUE SPECIFICITY</scope>
</reference>
<reference key="8">
    <citation type="journal article" date="2022" name="Science">
        <title>Human TKTL1 implies greater neurogenesis in frontal neocortex of modern humans than Neanderthals.</title>
        <authorList>
            <person name="Pinson A."/>
            <person name="Xing L."/>
            <person name="Namba T."/>
            <person name="Kalebic N."/>
            <person name="Peters J."/>
            <person name="Oegema C.E."/>
            <person name="Traikov S."/>
            <person name="Reppe K."/>
            <person name="Riesenberg S."/>
            <person name="Maricic T."/>
            <person name="Derihaci R."/>
            <person name="Wimberger P."/>
            <person name="Paeaebo S."/>
            <person name="Huttner W.B."/>
        </authorList>
    </citation>
    <scope>FUNCTION (ISOFORM 4)</scope>
    <scope>VARIANT LYS-317</scope>
    <scope>TISSUE SPECIFICITY (ISOFORM 4)</scope>
    <scope>DEVELOPMENTAL STAGE (ISOFORM 4)</scope>
</reference>
<name>TKTL1_HUMAN</name>
<evidence type="ECO:0000250" key="1"/>
<evidence type="ECO:0000250" key="2">
    <source>
        <dbReference type="UniProtKB" id="P23254"/>
    </source>
</evidence>
<evidence type="ECO:0000250" key="3">
    <source>
        <dbReference type="UniProtKB" id="P27302"/>
    </source>
</evidence>
<evidence type="ECO:0000269" key="4">
    <source>
    </source>
</evidence>
<evidence type="ECO:0000269" key="5">
    <source>
    </source>
</evidence>
<evidence type="ECO:0000269" key="6">
    <source>
    </source>
</evidence>
<evidence type="ECO:0000269" key="7">
    <source>
    </source>
</evidence>
<evidence type="ECO:0000269" key="8">
    <source>
    </source>
</evidence>
<evidence type="ECO:0000303" key="9">
    <source>
    </source>
</evidence>
<evidence type="ECO:0000303" key="10">
    <source>
    </source>
</evidence>
<evidence type="ECO:0000305" key="11"/>
<evidence type="ECO:0000305" key="12">
    <source>
    </source>
</evidence>
<accession>P51854</accession>
<accession>A8K896</accession>
<accession>Q5TYJ8</accession>
<accession>Q5TYJ9</accession>
<accession>Q8TC75</accession>